<keyword id="KW-0150">Chloroplast</keyword>
<keyword id="KW-0251">Elongation factor</keyword>
<keyword id="KW-0342">GTP-binding</keyword>
<keyword id="KW-0547">Nucleotide-binding</keyword>
<keyword id="KW-0934">Plastid</keyword>
<keyword id="KW-0648">Protein biosynthesis</keyword>
<keyword id="KW-1185">Reference proteome</keyword>
<keyword id="KW-0809">Transit peptide</keyword>
<evidence type="ECO:0000250" key="1"/>
<evidence type="ECO:0000255" key="2"/>
<evidence type="ECO:0000256" key="3">
    <source>
        <dbReference type="SAM" id="MobiDB-lite"/>
    </source>
</evidence>
<evidence type="ECO:0000305" key="4"/>
<sequence length="478" mass="51957">MASISAATATSSTKLVSSNSTNPLLPSSTKPSKLILSSSFTPNCSTLFLHSPATPSSTATHRHRRFTVRAARGKFERKKPHVNIGTIGHVDHGKTTLTAALTMALASMGNSAPKKYDEIDAAPEERARGITINTATVEYETENRHYAHVDCPGHADYVKNMITGAAQMDGAILVCSGADGPMPQTKEHILLAKQVGVPNMVVFLNKQDQVDDEELLQLVELEVRELLSSYEFPGDDIPIISGSALLALEALMANPSIKRGENQWVDKIYELMDAVDSYIPIPVRQTELPFLMAIEDVFSITGRGTVATGRVERGTVRIGDTVDIVGLKDTRSTTVTGVEMFQKILDEAMAGDNVGLLLRGIQKIDIQRGMVLAKPGTITPHTKFEAIVYVLKKEEGGRHSPFFSGYRPQFYMRTTDVTGKVTSITTDKGEESKMVMPGDRVNLVVELIMPVACEQGMRFAIREGGKTVGAGVIQKIIE</sequence>
<gene>
    <name type="primary">TUFA</name>
</gene>
<reference key="1">
    <citation type="journal article" date="1993" name="Plant Physiol.">
        <title>Cloning and nucleotide sequence of a tobacco chloroplast translational elongation factor, EF-Tu.</title>
        <authorList>
            <person name="Ursin V.M."/>
            <person name="Becker C.K."/>
            <person name="Shewmaker C.K."/>
        </authorList>
    </citation>
    <scope>NUCLEOTIDE SEQUENCE</scope>
    <source>
        <strain>cv. NK 326</strain>
    </source>
</reference>
<comment type="function">
    <text>This protein promotes the GTP-dependent binding of aminoacyl-tRNA to the A-site of ribosomes during protein biosynthesis.</text>
</comment>
<comment type="subcellular location">
    <subcellularLocation>
        <location>Plastid</location>
        <location>Chloroplast</location>
    </subcellularLocation>
</comment>
<comment type="similarity">
    <text evidence="4">Belongs to the TRAFAC class translation factor GTPase superfamily. Classic translation factor GTPase family. EF-Tu/EF-1A subfamily.</text>
</comment>
<dbReference type="EMBL" id="M94204">
    <property type="protein sequence ID" value="AAA18546.1"/>
    <property type="molecule type" value="Unassigned_DNA"/>
</dbReference>
<dbReference type="PIR" id="JQ2240">
    <property type="entry name" value="JQ2240"/>
</dbReference>
<dbReference type="PIR" id="S39153">
    <property type="entry name" value="S39153"/>
</dbReference>
<dbReference type="RefSeq" id="XP_016478946.1">
    <property type="nucleotide sequence ID" value="XM_016623460.1"/>
</dbReference>
<dbReference type="SMR" id="P68158"/>
<dbReference type="STRING" id="4097.P68158"/>
<dbReference type="PaxDb" id="4097-P68158"/>
<dbReference type="KEGG" id="nta:107800308"/>
<dbReference type="OMA" id="QRCFTIT"/>
<dbReference type="OrthoDB" id="2067at2759"/>
<dbReference type="Proteomes" id="UP000084051">
    <property type="component" value="Unplaced"/>
</dbReference>
<dbReference type="GO" id="GO:0009507">
    <property type="term" value="C:chloroplast"/>
    <property type="evidence" value="ECO:0007669"/>
    <property type="project" value="UniProtKB-SubCell"/>
</dbReference>
<dbReference type="GO" id="GO:0005739">
    <property type="term" value="C:mitochondrion"/>
    <property type="evidence" value="ECO:0000318"/>
    <property type="project" value="GO_Central"/>
</dbReference>
<dbReference type="GO" id="GO:0005525">
    <property type="term" value="F:GTP binding"/>
    <property type="evidence" value="ECO:0007669"/>
    <property type="project" value="UniProtKB-KW"/>
</dbReference>
<dbReference type="GO" id="GO:0003924">
    <property type="term" value="F:GTPase activity"/>
    <property type="evidence" value="ECO:0007669"/>
    <property type="project" value="InterPro"/>
</dbReference>
<dbReference type="GO" id="GO:0003746">
    <property type="term" value="F:translation elongation factor activity"/>
    <property type="evidence" value="ECO:0000318"/>
    <property type="project" value="GO_Central"/>
</dbReference>
<dbReference type="GO" id="GO:0070125">
    <property type="term" value="P:mitochondrial translational elongation"/>
    <property type="evidence" value="ECO:0000318"/>
    <property type="project" value="GO_Central"/>
</dbReference>
<dbReference type="CDD" id="cd01884">
    <property type="entry name" value="EF_Tu"/>
    <property type="match status" value="1"/>
</dbReference>
<dbReference type="CDD" id="cd03697">
    <property type="entry name" value="EFTU_II"/>
    <property type="match status" value="1"/>
</dbReference>
<dbReference type="CDD" id="cd03707">
    <property type="entry name" value="EFTU_III"/>
    <property type="match status" value="1"/>
</dbReference>
<dbReference type="FunFam" id="2.40.30.10:FF:000001">
    <property type="entry name" value="Elongation factor Tu"/>
    <property type="match status" value="1"/>
</dbReference>
<dbReference type="FunFam" id="2.40.30.10:FF:000046">
    <property type="entry name" value="Elongation factor Tu"/>
    <property type="match status" value="1"/>
</dbReference>
<dbReference type="FunFam" id="3.40.50.300:FF:000003">
    <property type="entry name" value="Elongation factor Tu"/>
    <property type="match status" value="1"/>
</dbReference>
<dbReference type="Gene3D" id="3.40.50.300">
    <property type="entry name" value="P-loop containing nucleotide triphosphate hydrolases"/>
    <property type="match status" value="1"/>
</dbReference>
<dbReference type="Gene3D" id="2.40.30.10">
    <property type="entry name" value="Translation factors"/>
    <property type="match status" value="2"/>
</dbReference>
<dbReference type="HAMAP" id="MF_00118_B">
    <property type="entry name" value="EF_Tu_B"/>
    <property type="match status" value="1"/>
</dbReference>
<dbReference type="InterPro" id="IPR041709">
    <property type="entry name" value="EF-Tu_GTP-bd"/>
</dbReference>
<dbReference type="InterPro" id="IPR050055">
    <property type="entry name" value="EF-Tu_GTPase"/>
</dbReference>
<dbReference type="InterPro" id="IPR004161">
    <property type="entry name" value="EFTu-like_2"/>
</dbReference>
<dbReference type="InterPro" id="IPR033720">
    <property type="entry name" value="EFTU_2"/>
</dbReference>
<dbReference type="InterPro" id="IPR031157">
    <property type="entry name" value="G_TR_CS"/>
</dbReference>
<dbReference type="InterPro" id="IPR027417">
    <property type="entry name" value="P-loop_NTPase"/>
</dbReference>
<dbReference type="InterPro" id="IPR005225">
    <property type="entry name" value="Small_GTP-bd"/>
</dbReference>
<dbReference type="InterPro" id="IPR000795">
    <property type="entry name" value="T_Tr_GTP-bd_dom"/>
</dbReference>
<dbReference type="InterPro" id="IPR009000">
    <property type="entry name" value="Transl_B-barrel_sf"/>
</dbReference>
<dbReference type="InterPro" id="IPR009001">
    <property type="entry name" value="Transl_elong_EF1A/Init_IF2_C"/>
</dbReference>
<dbReference type="InterPro" id="IPR004541">
    <property type="entry name" value="Transl_elong_EFTu/EF1A_bac/org"/>
</dbReference>
<dbReference type="InterPro" id="IPR004160">
    <property type="entry name" value="Transl_elong_EFTu/EF1A_C"/>
</dbReference>
<dbReference type="NCBIfam" id="TIGR00485">
    <property type="entry name" value="EF-Tu"/>
    <property type="match status" value="1"/>
</dbReference>
<dbReference type="NCBIfam" id="NF000766">
    <property type="entry name" value="PRK00049.1"/>
    <property type="match status" value="1"/>
</dbReference>
<dbReference type="NCBIfam" id="NF009372">
    <property type="entry name" value="PRK12735.1"/>
    <property type="match status" value="1"/>
</dbReference>
<dbReference type="NCBIfam" id="NF009373">
    <property type="entry name" value="PRK12736.1"/>
    <property type="match status" value="1"/>
</dbReference>
<dbReference type="NCBIfam" id="TIGR00231">
    <property type="entry name" value="small_GTP"/>
    <property type="match status" value="1"/>
</dbReference>
<dbReference type="PANTHER" id="PTHR43721:SF34">
    <property type="entry name" value="ELONGATION FACTOR TU, CHLOROPLASTIC"/>
    <property type="match status" value="1"/>
</dbReference>
<dbReference type="PANTHER" id="PTHR43721">
    <property type="entry name" value="ELONGATION FACTOR TU-RELATED"/>
    <property type="match status" value="1"/>
</dbReference>
<dbReference type="Pfam" id="PF00009">
    <property type="entry name" value="GTP_EFTU"/>
    <property type="match status" value="1"/>
</dbReference>
<dbReference type="Pfam" id="PF03144">
    <property type="entry name" value="GTP_EFTU_D2"/>
    <property type="match status" value="1"/>
</dbReference>
<dbReference type="Pfam" id="PF03143">
    <property type="entry name" value="GTP_EFTU_D3"/>
    <property type="match status" value="1"/>
</dbReference>
<dbReference type="PRINTS" id="PR00315">
    <property type="entry name" value="ELONGATNFCT"/>
</dbReference>
<dbReference type="SUPFAM" id="SSF50465">
    <property type="entry name" value="EF-Tu/eEF-1alpha/eIF2-gamma C-terminal domain"/>
    <property type="match status" value="1"/>
</dbReference>
<dbReference type="SUPFAM" id="SSF52540">
    <property type="entry name" value="P-loop containing nucleoside triphosphate hydrolases"/>
    <property type="match status" value="1"/>
</dbReference>
<dbReference type="SUPFAM" id="SSF50447">
    <property type="entry name" value="Translation proteins"/>
    <property type="match status" value="1"/>
</dbReference>
<dbReference type="PROSITE" id="PS00301">
    <property type="entry name" value="G_TR_1"/>
    <property type="match status" value="1"/>
</dbReference>
<dbReference type="PROSITE" id="PS51722">
    <property type="entry name" value="G_TR_2"/>
    <property type="match status" value="1"/>
</dbReference>
<feature type="transit peptide" description="Chloroplast" evidence="2">
    <location>
        <begin position="1"/>
        <end position="69"/>
    </location>
</feature>
<feature type="chain" id="PRO_0000007460" description="Elongation factor Tu, chloroplastic">
    <location>
        <begin position="70"/>
        <end position="478"/>
    </location>
</feature>
<feature type="domain" description="tr-type G">
    <location>
        <begin position="79"/>
        <end position="283"/>
    </location>
</feature>
<feature type="region of interest" description="Disordered" evidence="3">
    <location>
        <begin position="1"/>
        <end position="31"/>
    </location>
</feature>
<feature type="region of interest" description="G1" evidence="1">
    <location>
        <begin position="88"/>
        <end position="95"/>
    </location>
</feature>
<feature type="region of interest" description="G2" evidence="1">
    <location>
        <begin position="129"/>
        <end position="133"/>
    </location>
</feature>
<feature type="region of interest" description="G3" evidence="1">
    <location>
        <begin position="150"/>
        <end position="153"/>
    </location>
</feature>
<feature type="region of interest" description="G4" evidence="1">
    <location>
        <begin position="205"/>
        <end position="208"/>
    </location>
</feature>
<feature type="region of interest" description="G5" evidence="1">
    <location>
        <begin position="243"/>
        <end position="245"/>
    </location>
</feature>
<feature type="compositionally biased region" description="Low complexity" evidence="3">
    <location>
        <begin position="1"/>
        <end position="29"/>
    </location>
</feature>
<feature type="binding site" evidence="1">
    <location>
        <begin position="88"/>
        <end position="95"/>
    </location>
    <ligand>
        <name>GTP</name>
        <dbReference type="ChEBI" id="CHEBI:37565"/>
    </ligand>
</feature>
<feature type="binding site" evidence="1">
    <location>
        <begin position="150"/>
        <end position="154"/>
    </location>
    <ligand>
        <name>GTP</name>
        <dbReference type="ChEBI" id="CHEBI:37565"/>
    </ligand>
</feature>
<feature type="binding site" evidence="1">
    <location>
        <begin position="205"/>
        <end position="208"/>
    </location>
    <ligand>
        <name>GTP</name>
        <dbReference type="ChEBI" id="CHEBI:37565"/>
    </ligand>
</feature>
<proteinExistence type="inferred from homology"/>
<accession>P68158</accession>
<accession>P41342</accession>
<organism>
    <name type="scientific">Nicotiana tabacum</name>
    <name type="common">Common tobacco</name>
    <dbReference type="NCBI Taxonomy" id="4097"/>
    <lineage>
        <taxon>Eukaryota</taxon>
        <taxon>Viridiplantae</taxon>
        <taxon>Streptophyta</taxon>
        <taxon>Embryophyta</taxon>
        <taxon>Tracheophyta</taxon>
        <taxon>Spermatophyta</taxon>
        <taxon>Magnoliopsida</taxon>
        <taxon>eudicotyledons</taxon>
        <taxon>Gunneridae</taxon>
        <taxon>Pentapetalae</taxon>
        <taxon>asterids</taxon>
        <taxon>lamiids</taxon>
        <taxon>Solanales</taxon>
        <taxon>Solanaceae</taxon>
        <taxon>Nicotianoideae</taxon>
        <taxon>Nicotianeae</taxon>
        <taxon>Nicotiana</taxon>
    </lineage>
</organism>
<protein>
    <recommendedName>
        <fullName>Elongation factor Tu, chloroplastic</fullName>
        <shortName>EF-Tu</shortName>
    </recommendedName>
</protein>
<name>EFTU_TOBAC</name>